<accession>Q7ZYG4</accession>
<dbReference type="EMBL" id="BC043796">
    <property type="protein sequence ID" value="AAH43796.1"/>
    <property type="molecule type" value="mRNA"/>
</dbReference>
<dbReference type="RefSeq" id="NP_001080411.1">
    <property type="nucleotide sequence ID" value="NM_001086942.1"/>
</dbReference>
<dbReference type="SMR" id="Q7ZYG4"/>
<dbReference type="DNASU" id="380103"/>
<dbReference type="GeneID" id="380103"/>
<dbReference type="KEGG" id="xla:380103"/>
<dbReference type="AGR" id="Xenbase:XB-GENE-1018483"/>
<dbReference type="CTD" id="380103"/>
<dbReference type="Xenbase" id="XB-GENE-1018483">
    <property type="gene designation" value="ostf1.L"/>
</dbReference>
<dbReference type="OMA" id="XARTDLR"/>
<dbReference type="OrthoDB" id="207120at2759"/>
<dbReference type="Proteomes" id="UP000186698">
    <property type="component" value="Chromosome 1L"/>
</dbReference>
<dbReference type="Bgee" id="380103">
    <property type="expression patterns" value="Expressed in egg cell and 19 other cell types or tissues"/>
</dbReference>
<dbReference type="GO" id="GO:0005737">
    <property type="term" value="C:cytoplasm"/>
    <property type="evidence" value="ECO:0007669"/>
    <property type="project" value="UniProtKB-SubCell"/>
</dbReference>
<dbReference type="GO" id="GO:0007165">
    <property type="term" value="P:signal transduction"/>
    <property type="evidence" value="ECO:0000318"/>
    <property type="project" value="GO_Central"/>
</dbReference>
<dbReference type="CDD" id="cd11772">
    <property type="entry name" value="SH3_OSTF1"/>
    <property type="match status" value="1"/>
</dbReference>
<dbReference type="FunFam" id="2.30.30.40:FF:000158">
    <property type="entry name" value="Osteoclast-stimulating factor 1"/>
    <property type="match status" value="1"/>
</dbReference>
<dbReference type="Gene3D" id="1.25.40.20">
    <property type="entry name" value="Ankyrin repeat-containing domain"/>
    <property type="match status" value="1"/>
</dbReference>
<dbReference type="Gene3D" id="2.30.30.40">
    <property type="entry name" value="SH3 Domains"/>
    <property type="match status" value="1"/>
</dbReference>
<dbReference type="InterPro" id="IPR002110">
    <property type="entry name" value="Ankyrin_rpt"/>
</dbReference>
<dbReference type="InterPro" id="IPR036770">
    <property type="entry name" value="Ankyrin_rpt-contain_sf"/>
</dbReference>
<dbReference type="InterPro" id="IPR036028">
    <property type="entry name" value="SH3-like_dom_sf"/>
</dbReference>
<dbReference type="InterPro" id="IPR001452">
    <property type="entry name" value="SH3_domain"/>
</dbReference>
<dbReference type="PANTHER" id="PTHR24155">
    <property type="entry name" value="OSTEOCLAST-STIMULATING FACTOR 1"/>
    <property type="match status" value="1"/>
</dbReference>
<dbReference type="PANTHER" id="PTHR24155:SF10">
    <property type="entry name" value="OSTEOCLAST-STIMULATING FACTOR 1"/>
    <property type="match status" value="1"/>
</dbReference>
<dbReference type="Pfam" id="PF00023">
    <property type="entry name" value="Ank"/>
    <property type="match status" value="1"/>
</dbReference>
<dbReference type="Pfam" id="PF12796">
    <property type="entry name" value="Ank_2"/>
    <property type="match status" value="1"/>
</dbReference>
<dbReference type="Pfam" id="PF00018">
    <property type="entry name" value="SH3_1"/>
    <property type="match status" value="1"/>
</dbReference>
<dbReference type="PRINTS" id="PR00499">
    <property type="entry name" value="P67PHOX"/>
</dbReference>
<dbReference type="PRINTS" id="PR00452">
    <property type="entry name" value="SH3DOMAIN"/>
</dbReference>
<dbReference type="SMART" id="SM00248">
    <property type="entry name" value="ANK"/>
    <property type="match status" value="3"/>
</dbReference>
<dbReference type="SMART" id="SM00326">
    <property type="entry name" value="SH3"/>
    <property type="match status" value="1"/>
</dbReference>
<dbReference type="SUPFAM" id="SSF48403">
    <property type="entry name" value="Ankyrin repeat"/>
    <property type="match status" value="1"/>
</dbReference>
<dbReference type="SUPFAM" id="SSF50044">
    <property type="entry name" value="SH3-domain"/>
    <property type="match status" value="1"/>
</dbReference>
<dbReference type="PROSITE" id="PS50297">
    <property type="entry name" value="ANK_REP_REGION"/>
    <property type="match status" value="1"/>
</dbReference>
<dbReference type="PROSITE" id="PS50088">
    <property type="entry name" value="ANK_REPEAT"/>
    <property type="match status" value="1"/>
</dbReference>
<dbReference type="PROSITE" id="PS50002">
    <property type="entry name" value="SH3"/>
    <property type="match status" value="1"/>
</dbReference>
<proteinExistence type="evidence at transcript level"/>
<sequence>MSKPPPKPVKPGQVKVFRALYTFEPRTPDELYFEEGDILYIADMSDTNWWKGTCKGKTGLIPSNYVAEQAESIDNPLHEAAKRGNLSWLRECLENRVGVNGLDKAGSTALYWGCHGGHKDVVDMLLAQPNIELNQQNKLGDTALHAAAWKGYADIVELLLVKGARTDLRNNEKKLALDMATNAQCASLLKKKQAQGIVRTSSNADEYLDDEDSD</sequence>
<protein>
    <recommendedName>
        <fullName>Osteoclast-stimulating factor 1</fullName>
    </recommendedName>
</protein>
<keyword id="KW-0040">ANK repeat</keyword>
<keyword id="KW-0963">Cytoplasm</keyword>
<keyword id="KW-1185">Reference proteome</keyword>
<keyword id="KW-0677">Repeat</keyword>
<keyword id="KW-0728">SH3 domain</keyword>
<name>OSTF1_XENLA</name>
<evidence type="ECO:0000250" key="1"/>
<evidence type="ECO:0000255" key="2">
    <source>
        <dbReference type="PROSITE-ProRule" id="PRU00192"/>
    </source>
</evidence>
<reference key="1">
    <citation type="submission" date="2003-01" db="EMBL/GenBank/DDBJ databases">
        <authorList>
            <consortium name="NIH - Xenopus Gene Collection (XGC) project"/>
        </authorList>
    </citation>
    <scope>NUCLEOTIDE SEQUENCE [LARGE SCALE MRNA]</scope>
    <source>
        <tissue>Embryo</tissue>
    </source>
</reference>
<organism>
    <name type="scientific">Xenopus laevis</name>
    <name type="common">African clawed frog</name>
    <dbReference type="NCBI Taxonomy" id="8355"/>
    <lineage>
        <taxon>Eukaryota</taxon>
        <taxon>Metazoa</taxon>
        <taxon>Chordata</taxon>
        <taxon>Craniata</taxon>
        <taxon>Vertebrata</taxon>
        <taxon>Euteleostomi</taxon>
        <taxon>Amphibia</taxon>
        <taxon>Batrachia</taxon>
        <taxon>Anura</taxon>
        <taxon>Pipoidea</taxon>
        <taxon>Pipidae</taxon>
        <taxon>Xenopodinae</taxon>
        <taxon>Xenopus</taxon>
        <taxon>Xenopus</taxon>
    </lineage>
</organism>
<feature type="chain" id="PRO_0000238960" description="Osteoclast-stimulating factor 1">
    <location>
        <begin position="1"/>
        <end position="214"/>
    </location>
</feature>
<feature type="domain" description="SH3" evidence="2">
    <location>
        <begin position="12"/>
        <end position="71"/>
    </location>
</feature>
<feature type="repeat" description="ANK 1">
    <location>
        <begin position="72"/>
        <end position="101"/>
    </location>
</feature>
<feature type="repeat" description="ANK 2">
    <location>
        <begin position="105"/>
        <end position="135"/>
    </location>
</feature>
<feature type="repeat" description="ANK 3">
    <location>
        <begin position="139"/>
        <end position="168"/>
    </location>
</feature>
<comment type="function">
    <text evidence="1">Induces bone resorption, acting probably through a signaling cascade which results in the secretion of factor(s) enhancing osteoclast formation and activity.</text>
</comment>
<comment type="subcellular location">
    <subcellularLocation>
        <location evidence="1">Cytoplasm</location>
    </subcellularLocation>
</comment>
<gene>
    <name type="primary">ostf1</name>
</gene>